<feature type="chain" id="PRO_1000211969" description="Large ribosomal subunit protein eL37">
    <location>
        <begin position="1"/>
        <end position="61"/>
    </location>
</feature>
<feature type="zinc finger region" description="C4-type" evidence="1">
    <location>
        <begin position="19"/>
        <end position="37"/>
    </location>
</feature>
<feature type="binding site" evidence="1">
    <location>
        <position position="19"/>
    </location>
    <ligand>
        <name>Zn(2+)</name>
        <dbReference type="ChEBI" id="CHEBI:29105"/>
    </ligand>
</feature>
<feature type="binding site" evidence="1">
    <location>
        <position position="22"/>
    </location>
    <ligand>
        <name>Zn(2+)</name>
        <dbReference type="ChEBI" id="CHEBI:29105"/>
    </ligand>
</feature>
<feature type="binding site" evidence="1">
    <location>
        <position position="34"/>
    </location>
    <ligand>
        <name>Zn(2+)</name>
        <dbReference type="ChEBI" id="CHEBI:29105"/>
    </ligand>
</feature>
<feature type="binding site" evidence="1">
    <location>
        <position position="37"/>
    </location>
    <ligand>
        <name>Zn(2+)</name>
        <dbReference type="ChEBI" id="CHEBI:29105"/>
    </ligand>
</feature>
<gene>
    <name evidence="1" type="primary">rpl37e</name>
    <name type="ordered locus">M1627_1435</name>
</gene>
<reference key="1">
    <citation type="journal article" date="2009" name="Proc. Natl. Acad. Sci. U.S.A.">
        <title>Biogeography of the Sulfolobus islandicus pan-genome.</title>
        <authorList>
            <person name="Reno M.L."/>
            <person name="Held N.L."/>
            <person name="Fields C.J."/>
            <person name="Burke P.V."/>
            <person name="Whitaker R.J."/>
        </authorList>
    </citation>
    <scope>NUCLEOTIDE SEQUENCE [LARGE SCALE GENOMIC DNA]</scope>
    <source>
        <strain>M.16.27</strain>
    </source>
</reference>
<keyword id="KW-0479">Metal-binding</keyword>
<keyword id="KW-0687">Ribonucleoprotein</keyword>
<keyword id="KW-0689">Ribosomal protein</keyword>
<keyword id="KW-0694">RNA-binding</keyword>
<keyword id="KW-0699">rRNA-binding</keyword>
<keyword id="KW-0862">Zinc</keyword>
<keyword id="KW-0863">Zinc-finger</keyword>
<evidence type="ECO:0000255" key="1">
    <source>
        <dbReference type="HAMAP-Rule" id="MF_00547"/>
    </source>
</evidence>
<evidence type="ECO:0000305" key="2"/>
<proteinExistence type="inferred from homology"/>
<sequence>MKGTPSFGKMNKSHTHIRCRRCGRNAYNVSKHYCAACGFGKTKKIRRYSWQNKKVNGVRIR</sequence>
<accession>C3N5P3</accession>
<comment type="function">
    <text evidence="1">Binds to the 23S rRNA.</text>
</comment>
<comment type="cofactor">
    <cofactor evidence="1">
        <name>Zn(2+)</name>
        <dbReference type="ChEBI" id="CHEBI:29105"/>
    </cofactor>
    <text evidence="1">Binds 1 zinc ion per subunit.</text>
</comment>
<comment type="similarity">
    <text evidence="1">Belongs to the eukaryotic ribosomal protein eL37 family.</text>
</comment>
<protein>
    <recommendedName>
        <fullName evidence="1">Large ribosomal subunit protein eL37</fullName>
    </recommendedName>
    <alternativeName>
        <fullName evidence="2">50S ribosomal protein L37e</fullName>
    </alternativeName>
</protein>
<organism>
    <name type="scientific">Saccharolobus islandicus (strain M.16.27)</name>
    <name type="common">Sulfolobus islandicus</name>
    <dbReference type="NCBI Taxonomy" id="427318"/>
    <lineage>
        <taxon>Archaea</taxon>
        <taxon>Thermoproteota</taxon>
        <taxon>Thermoprotei</taxon>
        <taxon>Sulfolobales</taxon>
        <taxon>Sulfolobaceae</taxon>
        <taxon>Saccharolobus</taxon>
    </lineage>
</organism>
<dbReference type="EMBL" id="CP001401">
    <property type="protein sequence ID" value="ACP55318.1"/>
    <property type="molecule type" value="Genomic_DNA"/>
</dbReference>
<dbReference type="RefSeq" id="WP_012711384.1">
    <property type="nucleotide sequence ID" value="NC_012632.1"/>
</dbReference>
<dbReference type="SMR" id="C3N5P3"/>
<dbReference type="KEGG" id="sim:M1627_1435"/>
<dbReference type="HOGENOM" id="CLU_208825_0_0_2"/>
<dbReference type="Proteomes" id="UP000002307">
    <property type="component" value="Chromosome"/>
</dbReference>
<dbReference type="GO" id="GO:1990904">
    <property type="term" value="C:ribonucleoprotein complex"/>
    <property type="evidence" value="ECO:0007669"/>
    <property type="project" value="UniProtKB-KW"/>
</dbReference>
<dbReference type="GO" id="GO:0005840">
    <property type="term" value="C:ribosome"/>
    <property type="evidence" value="ECO:0007669"/>
    <property type="project" value="UniProtKB-KW"/>
</dbReference>
<dbReference type="GO" id="GO:0019843">
    <property type="term" value="F:rRNA binding"/>
    <property type="evidence" value="ECO:0007669"/>
    <property type="project" value="UniProtKB-KW"/>
</dbReference>
<dbReference type="GO" id="GO:0003735">
    <property type="term" value="F:structural constituent of ribosome"/>
    <property type="evidence" value="ECO:0007669"/>
    <property type="project" value="InterPro"/>
</dbReference>
<dbReference type="GO" id="GO:0008270">
    <property type="term" value="F:zinc ion binding"/>
    <property type="evidence" value="ECO:0007669"/>
    <property type="project" value="UniProtKB-UniRule"/>
</dbReference>
<dbReference type="GO" id="GO:0006412">
    <property type="term" value="P:translation"/>
    <property type="evidence" value="ECO:0007669"/>
    <property type="project" value="UniProtKB-UniRule"/>
</dbReference>
<dbReference type="FunFam" id="2.20.25.30:FF:000003">
    <property type="entry name" value="50S ribosomal protein L37e"/>
    <property type="match status" value="1"/>
</dbReference>
<dbReference type="Gene3D" id="2.20.25.30">
    <property type="match status" value="1"/>
</dbReference>
<dbReference type="HAMAP" id="MF_00547">
    <property type="entry name" value="Ribosomal_eL37"/>
    <property type="match status" value="1"/>
</dbReference>
<dbReference type="InterPro" id="IPR001569">
    <property type="entry name" value="Ribosomal_eL37"/>
</dbReference>
<dbReference type="InterPro" id="IPR011331">
    <property type="entry name" value="Ribosomal_eL37/eL43"/>
</dbReference>
<dbReference type="InterPro" id="IPR018267">
    <property type="entry name" value="Ribosomal_eL37_CS"/>
</dbReference>
<dbReference type="InterPro" id="IPR011332">
    <property type="entry name" value="Ribosomal_zn-bd"/>
</dbReference>
<dbReference type="NCBIfam" id="NF003214">
    <property type="entry name" value="PRK04179.1"/>
    <property type="match status" value="1"/>
</dbReference>
<dbReference type="Pfam" id="PF01907">
    <property type="entry name" value="Ribosomal_L37e"/>
    <property type="match status" value="1"/>
</dbReference>
<dbReference type="SUPFAM" id="SSF57829">
    <property type="entry name" value="Zn-binding ribosomal proteins"/>
    <property type="match status" value="1"/>
</dbReference>
<dbReference type="PROSITE" id="PS01077">
    <property type="entry name" value="RIBOSOMAL_L37E"/>
    <property type="match status" value="1"/>
</dbReference>
<name>RL37_SACI3</name>